<gene>
    <name evidence="13" type="primary">PIN2</name>
    <name evidence="15" type="synonym">AGR</name>
    <name evidence="14" type="synonym">AGR1</name>
    <name evidence="12" type="synonym">EIR1</name>
    <name evidence="13" type="synonym">WAV6</name>
    <name evidence="17" type="ordered locus">At5g57090</name>
    <name evidence="18" type="ORF">MUL3.3</name>
</gene>
<sequence>MITGKDMYDVLAAMVPLYVAMILAYGSVRWWGIFTPDQCSGINRFVAVFAVPLLSFHFISSNDPYAMNYHFLAADSLQKVVILAALFLWQAFSRRGSLEWMITLFSLSTLPNTLVMGIPLLRAMYGDFSGNLMVQIVVLQSIIWYTLMLFLFEFRGAKLLISEQFPETAGSITSFRVDSDVISLNGREPLQTDAEIGDDGKLHVVVRRSSAASSMISSFNKSHGGGLNSSMITPRASNLTGVEIYSVQSSREPTPRASSFNQTDFYAMFNASKAPSPRHGYTNSYGGAGAGPGGDVYSLQSSKGVTPRTSNFDEEVMKTAKKAGRGGRSMSGELYNNNSVPSYPPPNPMFTGSTSGASGVKKKESGGGGSGGGVGVGGQNKEMNMFVWSSSASPVSEANAKNAMTRGSSTDVSTDPKVSIPPHDNLATKAMQNLIENMSPGRKGHVEMDQDGNNGGKSPYMGKKGSDVEDGGPGPRKQQMPPASVMTRLILIMVWRKLIRNPNTYSSLFGLAWSLVSFKWNIKMPTIMSGSISILSDAGLGMAMFSLGLFMALQPKIIACGKSVAGFAMAVRFLTGPAVIAATSIAIGIRGDLLHIAIVQAALPQGIVPFVFAKEYNVHPDILSTAVIFGMLVALPVTVLYYVLLGL</sequence>
<proteinExistence type="evidence at protein level"/>
<name>PIN2_ARATH</name>
<accession>Q9LU77</accession>
<accession>O82810</accession>
<accession>Q9SYT2</accession>
<feature type="chain" id="PRO_0000123781" description="Auxin efflux carrier component 2">
    <location>
        <begin position="1"/>
        <end position="647"/>
    </location>
</feature>
<feature type="topological domain" description="Extracellular" evidence="16">
    <location>
        <begin position="1"/>
        <end position="7"/>
    </location>
</feature>
<feature type="transmembrane region" description="Helical; Name=1" evidence="4">
    <location>
        <begin position="8"/>
        <end position="28"/>
    </location>
</feature>
<feature type="topological domain" description="Cytoplasmic" evidence="16">
    <location>
        <begin position="29"/>
        <end position="38"/>
    </location>
</feature>
<feature type="transmembrane region" description="Helical; Name=2" evidence="4">
    <location>
        <begin position="39"/>
        <end position="59"/>
    </location>
</feature>
<feature type="topological domain" description="Extracellular" evidence="16">
    <location>
        <begin position="60"/>
        <end position="68"/>
    </location>
</feature>
<feature type="transmembrane region" description="Helical; Name=3" evidence="4">
    <location>
        <begin position="69"/>
        <end position="89"/>
    </location>
</feature>
<feature type="topological domain" description="Cytoplasmic" evidence="16">
    <location>
        <begin position="90"/>
        <end position="100"/>
    </location>
</feature>
<feature type="transmembrane region" description="Helical; Name=4" evidence="4">
    <location>
        <begin position="101"/>
        <end position="121"/>
    </location>
</feature>
<feature type="topological domain" description="Extracellular" evidence="16">
    <location>
        <begin position="122"/>
        <end position="131"/>
    </location>
</feature>
<feature type="transmembrane region" description="Helical; Name=5" evidence="4">
    <location>
        <begin position="132"/>
        <end position="152"/>
    </location>
</feature>
<feature type="topological domain" description="Cytoplasmic" evidence="16">
    <location>
        <begin position="153"/>
        <end position="507"/>
    </location>
</feature>
<feature type="transmembrane region" description="Helical; Name=6" evidence="4">
    <location>
        <begin position="508"/>
        <end position="528"/>
    </location>
</feature>
<feature type="topological domain" description="Extracellular" evidence="16">
    <location>
        <begin position="529"/>
        <end position="531"/>
    </location>
</feature>
<feature type="transmembrane region" description="Helical; Name=7" evidence="4">
    <location>
        <begin position="532"/>
        <end position="552"/>
    </location>
</feature>
<feature type="topological domain" description="Cytoplasmic" evidence="16">
    <location>
        <begin position="553"/>
        <end position="568"/>
    </location>
</feature>
<feature type="transmembrane region" description="Helical; Name=8" evidence="4">
    <location>
        <begin position="569"/>
        <end position="589"/>
    </location>
</feature>
<feature type="topological domain" description="Extracellular" evidence="16">
    <location>
        <begin position="590"/>
        <end position="592"/>
    </location>
</feature>
<feature type="transmembrane region" description="Helical; Name=9" evidence="4">
    <location>
        <begin position="593"/>
        <end position="613"/>
    </location>
</feature>
<feature type="topological domain" description="Cytoplasmic" evidence="16">
    <location>
        <begin position="614"/>
        <end position="626"/>
    </location>
</feature>
<feature type="transmembrane region" description="Helical; Name=10" evidence="4">
    <location>
        <begin position="627"/>
        <end position="647"/>
    </location>
</feature>
<feature type="region of interest" description="Disordered" evidence="5">
    <location>
        <begin position="339"/>
        <end position="380"/>
    </location>
</feature>
<feature type="region of interest" description="Disordered" evidence="5">
    <location>
        <begin position="397"/>
        <end position="420"/>
    </location>
</feature>
<feature type="region of interest" description="Disordered" evidence="5">
    <location>
        <begin position="440"/>
        <end position="481"/>
    </location>
</feature>
<feature type="compositionally biased region" description="Gly residues" evidence="5">
    <location>
        <begin position="366"/>
        <end position="378"/>
    </location>
</feature>
<feature type="binding site" evidence="2">
    <location>
        <position position="51"/>
    </location>
    <ligand>
        <name>(indol-3-yl)acetate</name>
        <dbReference type="ChEBI" id="CHEBI:30854"/>
    </ligand>
</feature>
<feature type="binding site" evidence="2">
    <location>
        <position position="112"/>
    </location>
    <ligand>
        <name>(indol-3-yl)acetate</name>
        <dbReference type="ChEBI" id="CHEBI:30854"/>
    </ligand>
</feature>
<feature type="binding site" evidence="2">
    <location>
        <position position="114"/>
    </location>
    <ligand>
        <name>(indol-3-yl)acetate</name>
        <dbReference type="ChEBI" id="CHEBI:30854"/>
    </ligand>
</feature>
<feature type="binding site" evidence="2">
    <location>
        <position position="145"/>
    </location>
    <ligand>
        <name>(indol-3-yl)acetate</name>
        <dbReference type="ChEBI" id="CHEBI:30854"/>
    </ligand>
</feature>
<feature type="binding site" evidence="2">
    <location>
        <position position="607"/>
    </location>
    <ligand>
        <name>(indol-3-yl)acetate</name>
        <dbReference type="ChEBI" id="CHEBI:30854"/>
    </ligand>
</feature>
<feature type="binding site" evidence="2">
    <location>
        <position position="608"/>
    </location>
    <ligand>
        <name>(indol-3-yl)acetate</name>
        <dbReference type="ChEBI" id="CHEBI:30854"/>
    </ligand>
</feature>
<feature type="modified residue" description="Phosphoserine" evidence="1">
    <location>
        <position position="237"/>
    </location>
</feature>
<feature type="modified residue" description="Phosphoserine" evidence="1">
    <location>
        <position position="258"/>
    </location>
</feature>
<feature type="modified residue" description="Phosphoserine" evidence="1">
    <location>
        <position position="310"/>
    </location>
</feature>
<feature type="modified residue" description="Phosphothreonine" evidence="1">
    <location>
        <position position="354"/>
    </location>
</feature>
<feature type="modified residue" description="Phosphoserine" evidence="3">
    <location>
        <position position="393"/>
    </location>
</feature>
<feature type="mutagenesis site" description="Reduced phosphorylation and lost ability to recruit NPY1/MAB4 and NPY5/MEL1 to the plasma membrane; when associated with A-258 and A-310." evidence="9">
    <original>S</original>
    <variation>A</variation>
    <location>
        <position position="237"/>
    </location>
</feature>
<feature type="mutagenesis site" description="Reduced phosphorylation and lost ability to recruit NPY1/MAB4 and NPY5/MEL1 to the plasma membrane; when associated with A-237 and A-310." evidence="9">
    <original>S</original>
    <variation>A</variation>
    <location>
        <position position="258"/>
    </location>
</feature>
<feature type="mutagenesis site" description="Reduced phosphorylation and lost ability to recruit NPY1/MAB4 and NPY5/MEL1 to the plasma membrane; when associated with A-237 and A-258." evidence="9">
    <original>S</original>
    <variation>A</variation>
    <location>
        <position position="310"/>
    </location>
</feature>
<feature type="sequence conflict" description="In Ref. 4; AAD16060." evidence="16" ref="4">
    <original>G</original>
    <variation>E</variation>
    <location>
        <position position="541"/>
    </location>
</feature>
<comment type="function">
    <text evidence="6 9">Acts as a component of the auxin efflux carrier (PubMed:20439545). Seems to be involved in the root-specific auxin transport, and mediates the root gravitropism (PubMed:20439545). Its particular localization suggests a role in the translocation of auxin towards the elongation zone (PubMed:20439545). Recrutes NPY proteins (e.g. NPY1/MAB4 and NPY5/MEL1) to the plasma membrane in a polar basal localization in root epidermis; this activity is optimized by AGC kinases-mediated (e.g. D6PK and PID) phosphorylation that limits their lateral diffusion-based escape (PubMed:33705718).</text>
</comment>
<comment type="subunit">
    <text evidence="1 7 9">Homodimer (By similarity). Interacts with FYPP1 and FYPP3 (PubMed:22715043). Component of a complex made of PINs (e.g. PIN1 and PIN2), MAB4/MELs (e.g. NPY1/MAB4 and NPY5/MEL1) and AGC kinases (e.g. D6PK and PID) at the plasma membrane (PubMed:33705718). Binds directly to NPY1/MAB4, NPY5/MEL1 and PID (PubMed:33705718).</text>
</comment>
<comment type="subcellular location">
    <subcellularLocation>
        <location evidence="6 9">Cell membrane</location>
        <topology evidence="16">Multi-pass membrane protein</topology>
    </subcellularLocation>
    <text evidence="9">Localized the plasma membrane in a polar apical localization.</text>
</comment>
<comment type="tissue specificity">
    <text>Root-specific. Localized to the cortex, epidermis and lateral root cap, predominantly at the upper side of cells.</text>
</comment>
<comment type="induction">
    <text evidence="8">Down-regulated by endoplasmic reticulum stress treatment.</text>
</comment>
<comment type="disruption phenotype">
    <text evidence="9 10 11">Loss-of-function mutations impair the root gravitropic response, lead to an increased sensitivity to ethylene and auxin transport inhibitors, and give rise to an auxin accumulation in root tips (PubMed:9679062, PubMed:9844024). Exclusive NPY5/MEL1 cytosolic subcellular localization and in apolar aggregates close to the plasma membrane in root epidermis and lateral root cap cells (PubMed:33705718).</text>
</comment>
<comment type="similarity">
    <text evidence="16">Belongs to the auxin efflux carrier (TC 2.A.69.1) family.</text>
</comment>
<comment type="sequence caution" evidence="16">
    <conflict type="erroneous gene model prediction">
        <sequence resource="EMBL-CDS" id="BAA97359"/>
    </conflict>
</comment>
<organism>
    <name type="scientific">Arabidopsis thaliana</name>
    <name type="common">Mouse-ear cress</name>
    <dbReference type="NCBI Taxonomy" id="3702"/>
    <lineage>
        <taxon>Eukaryota</taxon>
        <taxon>Viridiplantae</taxon>
        <taxon>Streptophyta</taxon>
        <taxon>Embryophyta</taxon>
        <taxon>Tracheophyta</taxon>
        <taxon>Spermatophyta</taxon>
        <taxon>Magnoliopsida</taxon>
        <taxon>eudicotyledons</taxon>
        <taxon>Gunneridae</taxon>
        <taxon>Pentapetalae</taxon>
        <taxon>rosids</taxon>
        <taxon>malvids</taxon>
        <taxon>Brassicales</taxon>
        <taxon>Brassicaceae</taxon>
        <taxon>Camelineae</taxon>
        <taxon>Arabidopsis</taxon>
    </lineage>
</organism>
<keyword id="KW-0927">Auxin signaling pathway</keyword>
<keyword id="KW-1003">Cell membrane</keyword>
<keyword id="KW-0472">Membrane</keyword>
<keyword id="KW-0597">Phosphoprotein</keyword>
<keyword id="KW-1185">Reference proteome</keyword>
<keyword id="KW-0812">Transmembrane</keyword>
<keyword id="KW-1133">Transmembrane helix</keyword>
<keyword id="KW-0813">Transport</keyword>
<protein>
    <recommendedName>
        <fullName evidence="13">Auxin efflux carrier component 2</fullName>
        <shortName evidence="13">AtPIN2</shortName>
    </recommendedName>
    <alternativeName>
        <fullName evidence="15">Auxin efflux carrier AGR</fullName>
    </alternativeName>
    <alternativeName>
        <fullName evidence="12">Ethylene-insensitive root 1</fullName>
        <shortName evidence="12">AtEIR1</shortName>
    </alternativeName>
    <alternativeName>
        <fullName evidence="14">Polar-auxin-transport efflux component AGR1</fullName>
    </alternativeName>
    <alternativeName>
        <fullName evidence="14">Protein AGRAVITROPIC 1</fullName>
        <shortName evidence="14">AtAGR1</shortName>
    </alternativeName>
    <alternativeName>
        <fullName evidence="13">Protein WAVY 6</fullName>
    </alternativeName>
</protein>
<evidence type="ECO:0000250" key="1">
    <source>
        <dbReference type="UniProtKB" id="Q9C6B8"/>
    </source>
</evidence>
<evidence type="ECO:0000250" key="2">
    <source>
        <dbReference type="UniProtKB" id="Q9LFP6"/>
    </source>
</evidence>
<evidence type="ECO:0000250" key="3">
    <source>
        <dbReference type="UniProtKB" id="Q9S7Z8"/>
    </source>
</evidence>
<evidence type="ECO:0000255" key="4"/>
<evidence type="ECO:0000256" key="5">
    <source>
        <dbReference type="SAM" id="MobiDB-lite"/>
    </source>
</evidence>
<evidence type="ECO:0000269" key="6">
    <source>
    </source>
</evidence>
<evidence type="ECO:0000269" key="7">
    <source>
    </source>
</evidence>
<evidence type="ECO:0000269" key="8">
    <source>
    </source>
</evidence>
<evidence type="ECO:0000269" key="9">
    <source>
    </source>
</evidence>
<evidence type="ECO:0000269" key="10">
    <source>
    </source>
</evidence>
<evidence type="ECO:0000269" key="11">
    <source>
    </source>
</evidence>
<evidence type="ECO:0000303" key="12">
    <source>
    </source>
</evidence>
<evidence type="ECO:0000303" key="13">
    <source>
    </source>
</evidence>
<evidence type="ECO:0000303" key="14">
    <source>
    </source>
</evidence>
<evidence type="ECO:0000303" key="15">
    <source>
    </source>
</evidence>
<evidence type="ECO:0000305" key="16"/>
<evidence type="ECO:0000312" key="17">
    <source>
        <dbReference type="Araport" id="AT5G57090"/>
    </source>
</evidence>
<evidence type="ECO:0000312" key="18">
    <source>
        <dbReference type="EMBL" id="BAA97359.1"/>
    </source>
</evidence>
<dbReference type="EMBL" id="AF056026">
    <property type="protein sequence ID" value="AAC39513.1"/>
    <property type="molecule type" value="mRNA"/>
</dbReference>
<dbReference type="EMBL" id="AF087459">
    <property type="protein sequence ID" value="AAC84042.1"/>
    <property type="molecule type" value="Genomic_DNA"/>
</dbReference>
<dbReference type="EMBL" id="AF093241">
    <property type="protein sequence ID" value="AAC61781.1"/>
    <property type="molecule type" value="mRNA"/>
</dbReference>
<dbReference type="EMBL" id="AF086906">
    <property type="protein sequence ID" value="AAD11780.1"/>
    <property type="molecule type" value="mRNA"/>
</dbReference>
<dbReference type="EMBL" id="AF086907">
    <property type="protein sequence ID" value="AAD16060.1"/>
    <property type="molecule type" value="Genomic_DNA"/>
</dbReference>
<dbReference type="EMBL" id="AB023042">
    <property type="protein sequence ID" value="BAA97359.1"/>
    <property type="status" value="ALT_SEQ"/>
    <property type="molecule type" value="Genomic_DNA"/>
</dbReference>
<dbReference type="EMBL" id="CP002688">
    <property type="protein sequence ID" value="AED96845.1"/>
    <property type="molecule type" value="Genomic_DNA"/>
</dbReference>
<dbReference type="EMBL" id="AY078965">
    <property type="protein sequence ID" value="AAL84962.1"/>
    <property type="molecule type" value="mRNA"/>
</dbReference>
<dbReference type="EMBL" id="BT001152">
    <property type="protein sequence ID" value="AAN64543.1"/>
    <property type="molecule type" value="mRNA"/>
</dbReference>
<dbReference type="PIR" id="T51808">
    <property type="entry name" value="T51808"/>
</dbReference>
<dbReference type="RefSeq" id="NP_568848.1">
    <property type="nucleotide sequence ID" value="NM_125091.4"/>
</dbReference>
<dbReference type="SMR" id="Q9LU77"/>
<dbReference type="BioGRID" id="21057">
    <property type="interactions" value="10"/>
</dbReference>
<dbReference type="FunCoup" id="Q9LU77">
    <property type="interactions" value="1"/>
</dbReference>
<dbReference type="IntAct" id="Q9LU77">
    <property type="interactions" value="8"/>
</dbReference>
<dbReference type="STRING" id="3702.Q9LU77"/>
<dbReference type="TCDB" id="2.A.69.1.2">
    <property type="family name" value="the auxin efflux carrier (aec) family"/>
</dbReference>
<dbReference type="GlyCosmos" id="Q9LU77">
    <property type="glycosylation" value="2 sites, No reported glycans"/>
</dbReference>
<dbReference type="iPTMnet" id="Q9LU77"/>
<dbReference type="PaxDb" id="3702-AT5G57090.1"/>
<dbReference type="ProteomicsDB" id="236758"/>
<dbReference type="EnsemblPlants" id="AT5G57090.1">
    <property type="protein sequence ID" value="AT5G57090.1"/>
    <property type="gene ID" value="AT5G57090"/>
</dbReference>
<dbReference type="GeneID" id="835813"/>
<dbReference type="Gramene" id="AT5G57090.1">
    <property type="protein sequence ID" value="AT5G57090.1"/>
    <property type="gene ID" value="AT5G57090"/>
</dbReference>
<dbReference type="KEGG" id="ath:AT5G57090"/>
<dbReference type="Araport" id="AT5G57090"/>
<dbReference type="TAIR" id="AT5G57090">
    <property type="gene designation" value="EIR1"/>
</dbReference>
<dbReference type="eggNOG" id="ENOG502QV64">
    <property type="taxonomic scope" value="Eukaryota"/>
</dbReference>
<dbReference type="HOGENOM" id="CLU_019285_1_1_1"/>
<dbReference type="InParanoid" id="Q9LU77"/>
<dbReference type="OMA" id="MSPGRKM"/>
<dbReference type="PhylomeDB" id="Q9LU77"/>
<dbReference type="PRO" id="PR:Q9LU77"/>
<dbReference type="Proteomes" id="UP000006548">
    <property type="component" value="Chromosome 5"/>
</dbReference>
<dbReference type="ExpressionAtlas" id="Q9LU77">
    <property type="expression patterns" value="baseline and differential"/>
</dbReference>
<dbReference type="GO" id="GO:0045178">
    <property type="term" value="C:basal part of cell"/>
    <property type="evidence" value="ECO:0000314"/>
    <property type="project" value="UniProtKB"/>
</dbReference>
<dbReference type="GO" id="GO:0009925">
    <property type="term" value="C:basal plasma membrane"/>
    <property type="evidence" value="ECO:0000314"/>
    <property type="project" value="UniProtKB"/>
</dbReference>
<dbReference type="GO" id="GO:0000323">
    <property type="term" value="C:lytic vacuole"/>
    <property type="evidence" value="ECO:0000314"/>
    <property type="project" value="TAIR"/>
</dbReference>
<dbReference type="GO" id="GO:0005886">
    <property type="term" value="C:plasma membrane"/>
    <property type="evidence" value="ECO:0000314"/>
    <property type="project" value="UniProtKB"/>
</dbReference>
<dbReference type="GO" id="GO:0010329">
    <property type="term" value="F:auxin efflux transmembrane transporter activity"/>
    <property type="evidence" value="ECO:0000314"/>
    <property type="project" value="TAIR"/>
</dbReference>
<dbReference type="GO" id="GO:0042802">
    <property type="term" value="F:identical protein binding"/>
    <property type="evidence" value="ECO:0000250"/>
    <property type="project" value="UniProtKB"/>
</dbReference>
<dbReference type="GO" id="GO:0042803">
    <property type="term" value="F:protein homodimerization activity"/>
    <property type="evidence" value="ECO:0000250"/>
    <property type="project" value="UniProtKB"/>
</dbReference>
<dbReference type="GO" id="GO:0009926">
    <property type="term" value="P:auxin polar transport"/>
    <property type="evidence" value="ECO:0000315"/>
    <property type="project" value="TAIR"/>
</dbReference>
<dbReference type="GO" id="GO:0009734">
    <property type="term" value="P:auxin-activated signaling pathway"/>
    <property type="evidence" value="ECO:0007669"/>
    <property type="project" value="UniProtKB-KW"/>
</dbReference>
<dbReference type="GO" id="GO:0009958">
    <property type="term" value="P:positive gravitropism"/>
    <property type="evidence" value="ECO:0000315"/>
    <property type="project" value="TAIR"/>
</dbReference>
<dbReference type="GO" id="GO:0009733">
    <property type="term" value="P:response to auxin"/>
    <property type="evidence" value="ECO:0000315"/>
    <property type="project" value="TAIR"/>
</dbReference>
<dbReference type="GO" id="GO:0009723">
    <property type="term" value="P:response to ethylene"/>
    <property type="evidence" value="ECO:0000315"/>
    <property type="project" value="TAIR"/>
</dbReference>
<dbReference type="GO" id="GO:0009749">
    <property type="term" value="P:response to glucose"/>
    <property type="evidence" value="ECO:0000270"/>
    <property type="project" value="UniProtKB"/>
</dbReference>
<dbReference type="GO" id="GO:0001666">
    <property type="term" value="P:response to hypoxia"/>
    <property type="evidence" value="ECO:0000270"/>
    <property type="project" value="TAIR"/>
</dbReference>
<dbReference type="InterPro" id="IPR014024">
    <property type="entry name" value="Auxin_eff_plant"/>
</dbReference>
<dbReference type="InterPro" id="IPR051107">
    <property type="entry name" value="Auxin_Efflux_Carrier"/>
</dbReference>
<dbReference type="InterPro" id="IPR004776">
    <property type="entry name" value="Mem_transp_PIN-like"/>
</dbReference>
<dbReference type="NCBIfam" id="TIGR00946">
    <property type="entry name" value="2a69"/>
    <property type="match status" value="1"/>
</dbReference>
<dbReference type="PANTHER" id="PTHR31752">
    <property type="entry name" value="AUXIN EFFLUX CARRIER COMPONENT 1B-RELATED"/>
    <property type="match status" value="1"/>
</dbReference>
<dbReference type="PANTHER" id="PTHR31752:SF4">
    <property type="entry name" value="AUXIN EFFLUX CARRIER COMPONENT 2"/>
    <property type="match status" value="1"/>
</dbReference>
<dbReference type="Pfam" id="PF03547">
    <property type="entry name" value="Mem_trans"/>
    <property type="match status" value="1"/>
</dbReference>
<reference key="1">
    <citation type="journal article" date="1998" name="Genes Dev.">
        <title>EIR1, a root-specific protein involved in auxin transport, is required for gravitropism in Arabidopsis thaliana.</title>
        <authorList>
            <person name="Luschnig C."/>
            <person name="Gaxiola R.A."/>
            <person name="Grisafi P."/>
            <person name="Fink G.R."/>
        </authorList>
    </citation>
    <scope>NUCLEOTIDE SEQUENCE [MRNA]</scope>
    <scope>CHARACTERIZATION</scope>
    <scope>DISRUPTION PHENOTYPE</scope>
    <source>
        <strain>cv. Columbia</strain>
    </source>
</reference>
<reference key="2">
    <citation type="journal article" date="1998" name="Proc. Natl. Acad. Sci. U.S.A.">
        <title>The Arabidopsis thaliana AGRAVITROPIC 1 gene encodes a component of the polar-auxin-transport efflux carrier.</title>
        <authorList>
            <person name="Chen R."/>
            <person name="Hilson P."/>
            <person name="Sedbrook J."/>
            <person name="Rosen E."/>
            <person name="Caspar T."/>
            <person name="Masson P.H."/>
        </authorList>
    </citation>
    <scope>NUCLEOTIDE SEQUENCE [GENOMIC DNA]</scope>
    <scope>CHARACTERIZATION</scope>
    <scope>DISRUPTION PHENOTYPE</scope>
    <source>
        <strain>cv. Wassilewskija</strain>
    </source>
</reference>
<reference key="3">
    <citation type="journal article" date="1998" name="Plant Cell Physiol.">
        <title>Agr, an Agravitropic locus of Arabidopsis thaliana, encodes a novel membrane-protein family member.</title>
        <authorList>
            <person name="Utsuno K."/>
            <person name="Shikanai T."/>
            <person name="Yamada Y."/>
            <person name="Hashimoto T."/>
        </authorList>
    </citation>
    <scope>NUCLEOTIDE SEQUENCE [MRNA]</scope>
    <source>
        <strain>cv. Landsberg erecta</strain>
        <tissue>Root</tissue>
    </source>
</reference>
<reference key="4">
    <citation type="journal article" date="1998" name="EMBO J.">
        <title>AtPIN2 defines a locus of Arabidopsis for root gravitropism control.</title>
        <authorList>
            <person name="Mueller A."/>
            <person name="Guan C."/>
            <person name="Gaelweiler L."/>
            <person name="Taenzler P."/>
            <person name="Huijser P."/>
            <person name="Marchant A."/>
            <person name="Parry G."/>
            <person name="Bennett M."/>
            <person name="Wisman E."/>
            <person name="Palme K."/>
        </authorList>
    </citation>
    <scope>NUCLEOTIDE SEQUENCE [GENOMIC DNA / MRNA]</scope>
    <scope>CHARACTERIZATION</scope>
    <scope>NULL MUTANT ATPIN2</scope>
</reference>
<reference key="5">
    <citation type="journal article" date="2000" name="DNA Res.">
        <title>Structural analysis of Arabidopsis thaliana chromosome 5. X. Sequence features of the regions of 3,076,755 bp covered by sixty P1 and TAC clones.</title>
        <authorList>
            <person name="Sato S."/>
            <person name="Nakamura Y."/>
            <person name="Kaneko T."/>
            <person name="Katoh T."/>
            <person name="Asamizu E."/>
            <person name="Kotani H."/>
            <person name="Tabata S."/>
        </authorList>
    </citation>
    <scope>NUCLEOTIDE SEQUENCE [LARGE SCALE GENOMIC DNA]</scope>
    <source>
        <strain>cv. Columbia</strain>
    </source>
</reference>
<reference key="6">
    <citation type="journal article" date="2017" name="Plant J.">
        <title>Araport11: a complete reannotation of the Arabidopsis thaliana reference genome.</title>
        <authorList>
            <person name="Cheng C.Y."/>
            <person name="Krishnakumar V."/>
            <person name="Chan A.P."/>
            <person name="Thibaud-Nissen F."/>
            <person name="Schobel S."/>
            <person name="Town C.D."/>
        </authorList>
    </citation>
    <scope>GENOME REANNOTATION</scope>
    <source>
        <strain>cv. Columbia</strain>
    </source>
</reference>
<reference key="7">
    <citation type="journal article" date="2003" name="Science">
        <title>Empirical analysis of transcriptional activity in the Arabidopsis genome.</title>
        <authorList>
            <person name="Yamada K."/>
            <person name="Lim J."/>
            <person name="Dale J.M."/>
            <person name="Chen H."/>
            <person name="Shinn P."/>
            <person name="Palm C.J."/>
            <person name="Southwick A.M."/>
            <person name="Wu H.C."/>
            <person name="Kim C.J."/>
            <person name="Nguyen M."/>
            <person name="Pham P.K."/>
            <person name="Cheuk R.F."/>
            <person name="Karlin-Newmann G."/>
            <person name="Liu S.X."/>
            <person name="Lam B."/>
            <person name="Sakano H."/>
            <person name="Wu T."/>
            <person name="Yu G."/>
            <person name="Miranda M."/>
            <person name="Quach H.L."/>
            <person name="Tripp M."/>
            <person name="Chang C.H."/>
            <person name="Lee J.M."/>
            <person name="Toriumi M.J."/>
            <person name="Chan M.M."/>
            <person name="Tang C.C."/>
            <person name="Onodera C.S."/>
            <person name="Deng J.M."/>
            <person name="Akiyama K."/>
            <person name="Ansari Y."/>
            <person name="Arakawa T."/>
            <person name="Banh J."/>
            <person name="Banno F."/>
            <person name="Bowser L."/>
            <person name="Brooks S.Y."/>
            <person name="Carninci P."/>
            <person name="Chao Q."/>
            <person name="Choy N."/>
            <person name="Enju A."/>
            <person name="Goldsmith A.D."/>
            <person name="Gurjal M."/>
            <person name="Hansen N.F."/>
            <person name="Hayashizaki Y."/>
            <person name="Johnson-Hopson C."/>
            <person name="Hsuan V.W."/>
            <person name="Iida K."/>
            <person name="Karnes M."/>
            <person name="Khan S."/>
            <person name="Koesema E."/>
            <person name="Ishida J."/>
            <person name="Jiang P.X."/>
            <person name="Jones T."/>
            <person name="Kawai J."/>
            <person name="Kamiya A."/>
            <person name="Meyers C."/>
            <person name="Nakajima M."/>
            <person name="Narusaka M."/>
            <person name="Seki M."/>
            <person name="Sakurai T."/>
            <person name="Satou M."/>
            <person name="Tamse R."/>
            <person name="Vaysberg M."/>
            <person name="Wallender E.K."/>
            <person name="Wong C."/>
            <person name="Yamamura Y."/>
            <person name="Yuan S."/>
            <person name="Shinozaki K."/>
            <person name="Davis R.W."/>
            <person name="Theologis A."/>
            <person name="Ecker J.R."/>
        </authorList>
    </citation>
    <scope>NUCLEOTIDE SEQUENCE [LARGE SCALE MRNA]</scope>
    <source>
        <strain>cv. Columbia</strain>
    </source>
</reference>
<reference key="8">
    <citation type="journal article" date="2005" name="Trends Plant Sci.">
        <title>The PIN auxin efflux facilitators: evolutionary and functional perspectives.</title>
        <authorList>
            <person name="Paponov I.A."/>
            <person name="Teale W.D."/>
            <person name="Trebar M."/>
            <person name="Blilou I."/>
            <person name="Palme K."/>
        </authorList>
    </citation>
    <scope>GENE FAMILY</scope>
    <scope>NOMENCLATURE</scope>
</reference>
<reference key="9">
    <citation type="journal article" date="2010" name="Plant Physiol.">
        <title>Differential auxin-transporting activities of PIN-FORMED proteins in Arabidopsis root hair cells.</title>
        <authorList>
            <person name="Ganguly A."/>
            <person name="Lee S.H."/>
            <person name="Cho M."/>
            <person name="Lee O.R."/>
            <person name="Yoo H."/>
            <person name="Cho H.T."/>
        </authorList>
    </citation>
    <scope>SUBCELLULAR LOCATION</scope>
    <scope>FUNCTION</scope>
</reference>
<reference key="10">
    <citation type="journal article" date="2012" name="Plant Cell">
        <title>A PP6-type phosphatase holoenzyme directly regulates PIN phosphorylation and auxin efflux in Arabidopsis.</title>
        <authorList>
            <person name="Dai M."/>
            <person name="Zhang C."/>
            <person name="Kania U."/>
            <person name="Chen F."/>
            <person name="Xue Q."/>
            <person name="McCray T."/>
            <person name="Li G."/>
            <person name="Qin G."/>
            <person name="Wakeley M."/>
            <person name="Terzaghi W."/>
            <person name="Wan J."/>
            <person name="Zhao Y."/>
            <person name="Xu J."/>
            <person name="Friml J."/>
            <person name="Deng X.W."/>
            <person name="Wang H."/>
        </authorList>
    </citation>
    <scope>INTERACTION WITH FYPP1 AND FYPP3</scope>
</reference>
<reference key="11">
    <citation type="journal article" date="2014" name="Plant J.">
        <title>Inter-regulation of the unfolded protein response and auxin signaling.</title>
        <authorList>
            <person name="Chen Y."/>
            <person name="Aung K."/>
            <person name="Rolcik J."/>
            <person name="Walicki K."/>
            <person name="Friml J."/>
            <person name="Brandizzi F."/>
        </authorList>
    </citation>
    <scope>INDUCTION</scope>
</reference>
<reference key="12">
    <citation type="journal article" date="2021" name="Curr. Biol.">
        <title>AGC kinases and MAB4/MEL proteins maintain PIN polarity by limiting lateral diffusion in plant cells.</title>
        <authorList>
            <person name="Glanc M."/>
            <person name="Van Gelderen K."/>
            <person name="Hoermayer L."/>
            <person name="Tan S."/>
            <person name="Naramoto S."/>
            <person name="Zhang X."/>
            <person name="Domjan D."/>
            <person name="Vcelarova L."/>
            <person name="Hauschild R."/>
            <person name="Johnson A."/>
            <person name="de Koning E."/>
            <person name="van Dop M."/>
            <person name="Rademacher E."/>
            <person name="Janson S."/>
            <person name="Wei X."/>
            <person name="Molnar G."/>
            <person name="Fendrych M."/>
            <person name="De Rybel B."/>
            <person name="Offringa R."/>
            <person name="Friml J."/>
        </authorList>
    </citation>
    <scope>FUNCTION</scope>
    <scope>DISRUPTION PHENOTYPE</scope>
    <scope>MUTAGENESIS OF SER-237; SER-258 AND SER-310</scope>
    <scope>SUBUNIT</scope>
    <scope>INTERACTION WITH NPY1/MAB4; NPY5/MEL1 AND PID</scope>
    <scope>SUBCELLULAR LOCATION</scope>
    <source>
        <strain>cv. Columbia</strain>
    </source>
</reference>